<keyword id="KW-0030">Aminoacyl-tRNA synthetase</keyword>
<keyword id="KW-0067">ATP-binding</keyword>
<keyword id="KW-0963">Cytoplasm</keyword>
<keyword id="KW-0436">Ligase</keyword>
<keyword id="KW-0460">Magnesium</keyword>
<keyword id="KW-0479">Metal-binding</keyword>
<keyword id="KW-0547">Nucleotide-binding</keyword>
<keyword id="KW-0648">Protein biosynthesis</keyword>
<keyword id="KW-1185">Reference proteome</keyword>
<keyword id="KW-0694">RNA-binding</keyword>
<keyword id="KW-0820">tRNA-binding</keyword>
<dbReference type="EC" id="6.1.1.20"/>
<dbReference type="EMBL" id="BA000022">
    <property type="protein sequence ID" value="BAA18390.1"/>
    <property type="molecule type" value="Genomic_DNA"/>
</dbReference>
<dbReference type="PIR" id="S75931">
    <property type="entry name" value="S75931"/>
</dbReference>
<dbReference type="SMR" id="P74296"/>
<dbReference type="FunCoup" id="P74296">
    <property type="interactions" value="454"/>
</dbReference>
<dbReference type="IntAct" id="P74296">
    <property type="interactions" value="4"/>
</dbReference>
<dbReference type="STRING" id="1148.gene:10499266"/>
<dbReference type="PaxDb" id="1148-1653476"/>
<dbReference type="EnsemblBacteria" id="BAA18390">
    <property type="protein sequence ID" value="BAA18390"/>
    <property type="gene ID" value="BAA18390"/>
</dbReference>
<dbReference type="KEGG" id="syn:sll1553"/>
<dbReference type="eggNOG" id="COG0072">
    <property type="taxonomic scope" value="Bacteria"/>
</dbReference>
<dbReference type="eggNOG" id="COG0073">
    <property type="taxonomic scope" value="Bacteria"/>
</dbReference>
<dbReference type="InParanoid" id="P74296"/>
<dbReference type="PhylomeDB" id="P74296"/>
<dbReference type="Proteomes" id="UP000001425">
    <property type="component" value="Chromosome"/>
</dbReference>
<dbReference type="GO" id="GO:0009328">
    <property type="term" value="C:phenylalanine-tRNA ligase complex"/>
    <property type="evidence" value="ECO:0000318"/>
    <property type="project" value="GO_Central"/>
</dbReference>
<dbReference type="GO" id="GO:0005524">
    <property type="term" value="F:ATP binding"/>
    <property type="evidence" value="ECO:0007669"/>
    <property type="project" value="UniProtKB-UniRule"/>
</dbReference>
<dbReference type="GO" id="GO:0000287">
    <property type="term" value="F:magnesium ion binding"/>
    <property type="evidence" value="ECO:0007669"/>
    <property type="project" value="UniProtKB-UniRule"/>
</dbReference>
<dbReference type="GO" id="GO:0004826">
    <property type="term" value="F:phenylalanine-tRNA ligase activity"/>
    <property type="evidence" value="ECO:0007669"/>
    <property type="project" value="UniProtKB-UniRule"/>
</dbReference>
<dbReference type="GO" id="GO:0000049">
    <property type="term" value="F:tRNA binding"/>
    <property type="evidence" value="ECO:0007669"/>
    <property type="project" value="UniProtKB-KW"/>
</dbReference>
<dbReference type="GO" id="GO:0006432">
    <property type="term" value="P:phenylalanyl-tRNA aminoacylation"/>
    <property type="evidence" value="ECO:0000318"/>
    <property type="project" value="GO_Central"/>
</dbReference>
<dbReference type="CDD" id="cd00769">
    <property type="entry name" value="PheRS_beta_core"/>
    <property type="match status" value="1"/>
</dbReference>
<dbReference type="CDD" id="cd02796">
    <property type="entry name" value="tRNA_bind_bactPheRS"/>
    <property type="match status" value="1"/>
</dbReference>
<dbReference type="FunFam" id="2.40.50.140:FF:000045">
    <property type="entry name" value="Phenylalanine--tRNA ligase beta subunit"/>
    <property type="match status" value="1"/>
</dbReference>
<dbReference type="FunFam" id="3.30.56.10:FF:000002">
    <property type="entry name" value="Phenylalanine--tRNA ligase beta subunit"/>
    <property type="match status" value="1"/>
</dbReference>
<dbReference type="FunFam" id="3.30.70.380:FF:000001">
    <property type="entry name" value="Phenylalanine--tRNA ligase beta subunit"/>
    <property type="match status" value="1"/>
</dbReference>
<dbReference type="FunFam" id="3.50.40.10:FF:000001">
    <property type="entry name" value="Phenylalanine--tRNA ligase beta subunit"/>
    <property type="match status" value="1"/>
</dbReference>
<dbReference type="Gene3D" id="3.30.56.10">
    <property type="match status" value="2"/>
</dbReference>
<dbReference type="Gene3D" id="3.30.930.10">
    <property type="entry name" value="Bira Bifunctional Protein, Domain 2"/>
    <property type="match status" value="1"/>
</dbReference>
<dbReference type="Gene3D" id="3.30.70.380">
    <property type="entry name" value="Ferrodoxin-fold anticodon-binding domain"/>
    <property type="match status" value="1"/>
</dbReference>
<dbReference type="Gene3D" id="2.40.50.140">
    <property type="entry name" value="Nucleic acid-binding proteins"/>
    <property type="match status" value="1"/>
</dbReference>
<dbReference type="Gene3D" id="3.50.40.10">
    <property type="entry name" value="Phenylalanyl-trna Synthetase, Chain B, domain 3"/>
    <property type="match status" value="1"/>
</dbReference>
<dbReference type="HAMAP" id="MF_00283">
    <property type="entry name" value="Phe_tRNA_synth_beta1"/>
    <property type="match status" value="1"/>
</dbReference>
<dbReference type="InterPro" id="IPR045864">
    <property type="entry name" value="aa-tRNA-synth_II/BPL/LPL"/>
</dbReference>
<dbReference type="InterPro" id="IPR005146">
    <property type="entry name" value="B3/B4_tRNA-bd"/>
</dbReference>
<dbReference type="InterPro" id="IPR009061">
    <property type="entry name" value="DNA-bd_dom_put_sf"/>
</dbReference>
<dbReference type="InterPro" id="IPR005121">
    <property type="entry name" value="Fdx_antiC-bd"/>
</dbReference>
<dbReference type="InterPro" id="IPR036690">
    <property type="entry name" value="Fdx_antiC-bd_sf"/>
</dbReference>
<dbReference type="InterPro" id="IPR012340">
    <property type="entry name" value="NA-bd_OB-fold"/>
</dbReference>
<dbReference type="InterPro" id="IPR045060">
    <property type="entry name" value="Phe-tRNA-ligase_IIc_bsu"/>
</dbReference>
<dbReference type="InterPro" id="IPR004532">
    <property type="entry name" value="Phe-tRNA-ligase_IIc_bsu_bact"/>
</dbReference>
<dbReference type="InterPro" id="IPR020825">
    <property type="entry name" value="Phe-tRNA_synthase-like_B3/B4"/>
</dbReference>
<dbReference type="InterPro" id="IPR041616">
    <property type="entry name" value="PheRS_beta_core"/>
</dbReference>
<dbReference type="InterPro" id="IPR002547">
    <property type="entry name" value="tRNA-bd_dom"/>
</dbReference>
<dbReference type="InterPro" id="IPR033714">
    <property type="entry name" value="tRNA_bind_bactPheRS"/>
</dbReference>
<dbReference type="InterPro" id="IPR005147">
    <property type="entry name" value="tRNA_synthase_B5-dom"/>
</dbReference>
<dbReference type="NCBIfam" id="TIGR00472">
    <property type="entry name" value="pheT_bact"/>
    <property type="match status" value="1"/>
</dbReference>
<dbReference type="NCBIfam" id="NF045760">
    <property type="entry name" value="YtpR"/>
    <property type="match status" value="1"/>
</dbReference>
<dbReference type="PANTHER" id="PTHR10947:SF0">
    <property type="entry name" value="PHENYLALANINE--TRNA LIGASE BETA SUBUNIT"/>
    <property type="match status" value="1"/>
</dbReference>
<dbReference type="PANTHER" id="PTHR10947">
    <property type="entry name" value="PHENYLALANYL-TRNA SYNTHETASE BETA CHAIN AND LEUCINE-RICH REPEAT-CONTAINING PROTEIN 47"/>
    <property type="match status" value="1"/>
</dbReference>
<dbReference type="Pfam" id="PF03483">
    <property type="entry name" value="B3_4"/>
    <property type="match status" value="1"/>
</dbReference>
<dbReference type="Pfam" id="PF03484">
    <property type="entry name" value="B5"/>
    <property type="match status" value="1"/>
</dbReference>
<dbReference type="Pfam" id="PF03147">
    <property type="entry name" value="FDX-ACB"/>
    <property type="match status" value="1"/>
</dbReference>
<dbReference type="Pfam" id="PF01588">
    <property type="entry name" value="tRNA_bind"/>
    <property type="match status" value="1"/>
</dbReference>
<dbReference type="Pfam" id="PF17759">
    <property type="entry name" value="tRNA_synthFbeta"/>
    <property type="match status" value="1"/>
</dbReference>
<dbReference type="SMART" id="SM00873">
    <property type="entry name" value="B3_4"/>
    <property type="match status" value="1"/>
</dbReference>
<dbReference type="SMART" id="SM00874">
    <property type="entry name" value="B5"/>
    <property type="match status" value="1"/>
</dbReference>
<dbReference type="SMART" id="SM00896">
    <property type="entry name" value="FDX-ACB"/>
    <property type="match status" value="1"/>
</dbReference>
<dbReference type="SUPFAM" id="SSF54991">
    <property type="entry name" value="Anticodon-binding domain of PheRS"/>
    <property type="match status" value="1"/>
</dbReference>
<dbReference type="SUPFAM" id="SSF55681">
    <property type="entry name" value="Class II aaRS and biotin synthetases"/>
    <property type="match status" value="1"/>
</dbReference>
<dbReference type="SUPFAM" id="SSF50249">
    <property type="entry name" value="Nucleic acid-binding proteins"/>
    <property type="match status" value="1"/>
</dbReference>
<dbReference type="SUPFAM" id="SSF56037">
    <property type="entry name" value="PheT/TilS domain"/>
    <property type="match status" value="1"/>
</dbReference>
<dbReference type="SUPFAM" id="SSF46955">
    <property type="entry name" value="Putative DNA-binding domain"/>
    <property type="match status" value="1"/>
</dbReference>
<dbReference type="PROSITE" id="PS51483">
    <property type="entry name" value="B5"/>
    <property type="match status" value="1"/>
</dbReference>
<dbReference type="PROSITE" id="PS51447">
    <property type="entry name" value="FDX_ACB"/>
    <property type="match status" value="1"/>
</dbReference>
<dbReference type="PROSITE" id="PS50886">
    <property type="entry name" value="TRBD"/>
    <property type="match status" value="1"/>
</dbReference>
<feature type="chain" id="PRO_0000126974" description="Phenylalanine--tRNA ligase beta subunit">
    <location>
        <begin position="1"/>
        <end position="810"/>
    </location>
</feature>
<feature type="domain" description="tRNA-binding">
    <location>
        <begin position="39"/>
        <end position="150"/>
    </location>
</feature>
<feature type="domain" description="B5">
    <location>
        <begin position="407"/>
        <end position="495"/>
    </location>
</feature>
<feature type="domain" description="FDX-ACB">
    <location>
        <begin position="716"/>
        <end position="809"/>
    </location>
</feature>
<feature type="binding site" evidence="1">
    <location>
        <position position="473"/>
    </location>
    <ligand>
        <name>Mg(2+)</name>
        <dbReference type="ChEBI" id="CHEBI:18420"/>
        <note>shared with alpha subunit</note>
    </ligand>
</feature>
<feature type="binding site" evidence="1">
    <location>
        <position position="479"/>
    </location>
    <ligand>
        <name>Mg(2+)</name>
        <dbReference type="ChEBI" id="CHEBI:18420"/>
        <note>shared with alpha subunit</note>
    </ligand>
</feature>
<feature type="binding site" evidence="1">
    <location>
        <position position="482"/>
    </location>
    <ligand>
        <name>Mg(2+)</name>
        <dbReference type="ChEBI" id="CHEBI:18420"/>
        <note>shared with alpha subunit</note>
    </ligand>
</feature>
<feature type="binding site" evidence="1">
    <location>
        <position position="483"/>
    </location>
    <ligand>
        <name>Mg(2+)</name>
        <dbReference type="ChEBI" id="CHEBI:18420"/>
        <note>shared with alpha subunit</note>
    </ligand>
</feature>
<organism>
    <name type="scientific">Synechocystis sp. (strain ATCC 27184 / PCC 6803 / Kazusa)</name>
    <dbReference type="NCBI Taxonomy" id="1111708"/>
    <lineage>
        <taxon>Bacteria</taxon>
        <taxon>Bacillati</taxon>
        <taxon>Cyanobacteriota</taxon>
        <taxon>Cyanophyceae</taxon>
        <taxon>Synechococcales</taxon>
        <taxon>Merismopediaceae</taxon>
        <taxon>Synechocystis</taxon>
    </lineage>
</organism>
<evidence type="ECO:0000250" key="1"/>
<evidence type="ECO:0000305" key="2"/>
<protein>
    <recommendedName>
        <fullName>Phenylalanine--tRNA ligase beta subunit</fullName>
        <ecNumber>6.1.1.20</ecNumber>
    </recommendedName>
    <alternativeName>
        <fullName>Phenylalanyl-tRNA synthetase beta subunit</fullName>
        <shortName>PheRS</shortName>
    </alternativeName>
</protein>
<proteinExistence type="inferred from homology"/>
<sequence>MRISVNWLQSLVELNLSPEELGELLTIAGLEVEEIEDRRSWAAGVVLGRVISREKHPNADKLSVCVVDIGTEEPSTIVCGAANVRADILVPVATLGSYLPKVDLKIKPAKLRGVKSSGMICSLAELGLSKESEGIHIFPDLDLPSGSPVGPLLGLDDVILEISPTANRADALSMVGVAREVAALTGGKLSLPEIKAVSVSDQDLPISVTEPQACPTYVGTVIRGVKVGPSPDWLQQRLLAAGTRPINNVVDVTNYVLLEWGQPLHSFDQDKLQTLVGPEGFALGVRFAEEGEKLITLDDQERTLQPQNLLVTANDQPVAIAGVMGGAATEVDENTQNIVLETALFDGVTIRKSSKAINLRSESSTRYERGVNRCELEVALHRAIALMTELAGGTVVRQGKADQRQDRGEAIINLRLERLQQLLGKVNTPTGIGNITAEDVERILTDLGCGLTRQSDSDTPVWAVTVPSYRQRDIEREIDLIEEVARLYGYDHFCEQLPSNTIAGGLSPSYQAELALREACRGVGLTEVVHYSLVKPHGSEVMLANPLFAEYSALRTNLLDGLITAFANNQAQNNGALNAFEVGRVFWQNEGDIGEADHLAGICGGSQITEGTWPQGGKPQPMSWYDAKGLLEAIFQRLGATVTYSGDHQDPRLHPGRTALLSCNGTVLGRFGQLHPQLRREKGLIDEVYAFEITLTPLYQAMETQILGTPDFRPYSPYPAVARDLALYAPLELTVAELTQAMVKAGGDLLEQVELFDEYRGQSVPAGQRSLAFSLAYRVGDRTLTDADVEPLHNQIREALTKQFAVSLRS</sequence>
<comment type="catalytic activity">
    <reaction>
        <text>tRNA(Phe) + L-phenylalanine + ATP = L-phenylalanyl-tRNA(Phe) + AMP + diphosphate + H(+)</text>
        <dbReference type="Rhea" id="RHEA:19413"/>
        <dbReference type="Rhea" id="RHEA-COMP:9668"/>
        <dbReference type="Rhea" id="RHEA-COMP:9699"/>
        <dbReference type="ChEBI" id="CHEBI:15378"/>
        <dbReference type="ChEBI" id="CHEBI:30616"/>
        <dbReference type="ChEBI" id="CHEBI:33019"/>
        <dbReference type="ChEBI" id="CHEBI:58095"/>
        <dbReference type="ChEBI" id="CHEBI:78442"/>
        <dbReference type="ChEBI" id="CHEBI:78531"/>
        <dbReference type="ChEBI" id="CHEBI:456215"/>
        <dbReference type="EC" id="6.1.1.20"/>
    </reaction>
</comment>
<comment type="cofactor">
    <cofactor evidence="1">
        <name>Mg(2+)</name>
        <dbReference type="ChEBI" id="CHEBI:18420"/>
    </cofactor>
    <text evidence="1">Binds 2 magnesium ions per tetramer.</text>
</comment>
<comment type="subunit">
    <text evidence="1">Tetramer of two alpha and two beta subunits.</text>
</comment>
<comment type="subcellular location">
    <subcellularLocation>
        <location evidence="1">Cytoplasm</location>
    </subcellularLocation>
</comment>
<comment type="similarity">
    <text evidence="2">Belongs to the phenylalanyl-tRNA synthetase beta subunit family. Type 1 subfamily.</text>
</comment>
<name>SYFB_SYNY3</name>
<reference key="1">
    <citation type="journal article" date="1996" name="DNA Res.">
        <title>Sequence analysis of the genome of the unicellular cyanobacterium Synechocystis sp. strain PCC6803. II. Sequence determination of the entire genome and assignment of potential protein-coding regions.</title>
        <authorList>
            <person name="Kaneko T."/>
            <person name="Sato S."/>
            <person name="Kotani H."/>
            <person name="Tanaka A."/>
            <person name="Asamizu E."/>
            <person name="Nakamura Y."/>
            <person name="Miyajima N."/>
            <person name="Hirosawa M."/>
            <person name="Sugiura M."/>
            <person name="Sasamoto S."/>
            <person name="Kimura T."/>
            <person name="Hosouchi T."/>
            <person name="Matsuno A."/>
            <person name="Muraki A."/>
            <person name="Nakazaki N."/>
            <person name="Naruo K."/>
            <person name="Okumura S."/>
            <person name="Shimpo S."/>
            <person name="Takeuchi C."/>
            <person name="Wada T."/>
            <person name="Watanabe A."/>
            <person name="Yamada M."/>
            <person name="Yasuda M."/>
            <person name="Tabata S."/>
        </authorList>
    </citation>
    <scope>NUCLEOTIDE SEQUENCE [LARGE SCALE GENOMIC DNA]</scope>
    <source>
        <strain>ATCC 27184 / PCC 6803 / Kazusa</strain>
    </source>
</reference>
<accession>P74296</accession>
<gene>
    <name type="primary">pheT</name>
    <name type="ordered locus">sll1553</name>
</gene>